<reference evidence="4" key="1">
    <citation type="submission" date="2008-07" db="UniProtKB">
        <authorList>
            <person name="Sabater Jara A.B."/>
            <person name="Almagro L."/>
            <person name="Bru R."/>
            <person name="Pedreno M.A."/>
        </authorList>
    </citation>
    <scope>PROTEIN SEQUENCE</scope>
</reference>
<protein>
    <recommendedName>
        <fullName evidence="1">Peroxidase 8</fullName>
        <ecNumber>1.11.1.7</ecNumber>
    </recommendedName>
</protein>
<sequence>NAPPNLTLR</sequence>
<accession>P86064</accession>
<proteinExistence type="evidence at protein level"/>
<keyword id="KW-0106">Calcium</keyword>
<keyword id="KW-0903">Direct protein sequencing</keyword>
<keyword id="KW-0325">Glycoprotein</keyword>
<keyword id="KW-0349">Heme</keyword>
<keyword id="KW-0376">Hydrogen peroxide</keyword>
<keyword id="KW-0408">Iron</keyword>
<keyword id="KW-0479">Metal-binding</keyword>
<keyword id="KW-0560">Oxidoreductase</keyword>
<keyword id="KW-0575">Peroxidase</keyword>
<comment type="function">
    <text evidence="3">Removal of H(2)O(2), oxidation of toxic reductants, biosynthesis and degradation of lignin, suberization, auxin catabolism, response to environmental stresses such as wounding, pathogen attack and oxidative stress. These functions might be dependent on each isozyme/isoform in each plant tissue.</text>
</comment>
<comment type="catalytic activity">
    <reaction>
        <text>2 a phenolic donor + H2O2 = 2 a phenolic radical donor + 2 H2O</text>
        <dbReference type="Rhea" id="RHEA:56136"/>
        <dbReference type="ChEBI" id="CHEBI:15377"/>
        <dbReference type="ChEBI" id="CHEBI:16240"/>
        <dbReference type="ChEBI" id="CHEBI:139520"/>
        <dbReference type="ChEBI" id="CHEBI:139521"/>
        <dbReference type="EC" id="1.11.1.7"/>
    </reaction>
</comment>
<comment type="cofactor">
    <cofactor evidence="1 3">
        <name>Ca(2+)</name>
        <dbReference type="ChEBI" id="CHEBI:29108"/>
    </cofactor>
    <text evidence="1 3">Binds 2 calcium ions per subunit.</text>
</comment>
<comment type="cofactor">
    <cofactor evidence="1 3">
        <name>heme b</name>
        <dbReference type="ChEBI" id="CHEBI:60344"/>
    </cofactor>
    <text evidence="1 3">Binds 1 heme b (iron(II)-protoporphyrin IX) group per subunit.</text>
</comment>
<comment type="similarity">
    <text evidence="3">Belongs to the peroxidase family. Classical plant (class III) peroxidase subfamily.</text>
</comment>
<dbReference type="EC" id="1.11.1.7"/>
<dbReference type="GO" id="GO:0140825">
    <property type="term" value="F:lactoperoxidase activity"/>
    <property type="evidence" value="ECO:0007669"/>
    <property type="project" value="UniProtKB-EC"/>
</dbReference>
<dbReference type="GO" id="GO:0046872">
    <property type="term" value="F:metal ion binding"/>
    <property type="evidence" value="ECO:0007669"/>
    <property type="project" value="UniProtKB-KW"/>
</dbReference>
<dbReference type="GO" id="GO:0042744">
    <property type="term" value="P:hydrogen peroxide catabolic process"/>
    <property type="evidence" value="ECO:0007669"/>
    <property type="project" value="UniProtKB-KW"/>
</dbReference>
<organism>
    <name type="scientific">Daucus carota</name>
    <name type="common">Wild carrot</name>
    <dbReference type="NCBI Taxonomy" id="4039"/>
    <lineage>
        <taxon>Eukaryota</taxon>
        <taxon>Viridiplantae</taxon>
        <taxon>Streptophyta</taxon>
        <taxon>Embryophyta</taxon>
        <taxon>Tracheophyta</taxon>
        <taxon>Spermatophyta</taxon>
        <taxon>Magnoliopsida</taxon>
        <taxon>eudicotyledons</taxon>
        <taxon>Gunneridae</taxon>
        <taxon>Pentapetalae</taxon>
        <taxon>asterids</taxon>
        <taxon>campanulids</taxon>
        <taxon>Apiales</taxon>
        <taxon>Apiaceae</taxon>
        <taxon>Apioideae</taxon>
        <taxon>Scandiceae</taxon>
        <taxon>Daucinae</taxon>
        <taxon>Daucus</taxon>
        <taxon>Daucus sect. Daucus</taxon>
    </lineage>
</organism>
<feature type="chain" id="PRO_0000355600" description="Peroxidase 8">
    <location>
        <begin position="1" status="less than"/>
        <end position="9" status="greater than"/>
    </location>
</feature>
<feature type="glycosylation site" description="N-linked (GlcNAc...) asparagine" evidence="2">
    <location>
        <position position="5"/>
    </location>
</feature>
<feature type="unsure residue" description="L or I">
    <location>
        <position position="6"/>
    </location>
</feature>
<feature type="unsure residue" description="L or I">
    <location>
        <position position="8"/>
    </location>
</feature>
<feature type="non-terminal residue">
    <location>
        <position position="1"/>
    </location>
</feature>
<feature type="non-terminal residue">
    <location>
        <position position="9"/>
    </location>
</feature>
<name>PER8_DAUCA</name>
<evidence type="ECO:0000250" key="1">
    <source>
        <dbReference type="UniProtKB" id="P84516"/>
    </source>
</evidence>
<evidence type="ECO:0000255" key="2"/>
<evidence type="ECO:0000255" key="3">
    <source>
        <dbReference type="PROSITE-ProRule" id="PRU00297"/>
    </source>
</evidence>
<evidence type="ECO:0000305" key="4"/>